<comment type="function">
    <text evidence="1">Probably binds the 23S rRNA.</text>
</comment>
<comment type="subunit">
    <text>Part of the 50S ribosomal subunit.</text>
</comment>
<comment type="subcellular location">
    <subcellularLocation>
        <location>Plastid</location>
        <location>Chloroplast</location>
    </subcellularLocation>
</comment>
<comment type="similarity">
    <text evidence="3">Belongs to the universal ribosomal protein uL4 family.</text>
</comment>
<dbReference type="EMBL" id="EF067921">
    <property type="protein sequence ID" value="ABK20808.1"/>
    <property type="molecule type" value="Genomic_DNA"/>
</dbReference>
<dbReference type="RefSeq" id="YP_874585.1">
    <property type="nucleotide sequence ID" value="NC_008589.1"/>
</dbReference>
<dbReference type="SMR" id="A0T0X3"/>
<dbReference type="STRING" id="35128.A0T0X3"/>
<dbReference type="GeneID" id="4524724"/>
<dbReference type="InParanoid" id="A0T0X3"/>
<dbReference type="GO" id="GO:0009507">
    <property type="term" value="C:chloroplast"/>
    <property type="evidence" value="ECO:0007669"/>
    <property type="project" value="UniProtKB-SubCell"/>
</dbReference>
<dbReference type="GO" id="GO:1990904">
    <property type="term" value="C:ribonucleoprotein complex"/>
    <property type="evidence" value="ECO:0007669"/>
    <property type="project" value="UniProtKB-KW"/>
</dbReference>
<dbReference type="GO" id="GO:0005840">
    <property type="term" value="C:ribosome"/>
    <property type="evidence" value="ECO:0007669"/>
    <property type="project" value="UniProtKB-KW"/>
</dbReference>
<dbReference type="GO" id="GO:0019843">
    <property type="term" value="F:rRNA binding"/>
    <property type="evidence" value="ECO:0007669"/>
    <property type="project" value="UniProtKB-UniRule"/>
</dbReference>
<dbReference type="GO" id="GO:0003735">
    <property type="term" value="F:structural constituent of ribosome"/>
    <property type="evidence" value="ECO:0000318"/>
    <property type="project" value="GO_Central"/>
</dbReference>
<dbReference type="GO" id="GO:0006412">
    <property type="term" value="P:translation"/>
    <property type="evidence" value="ECO:0007669"/>
    <property type="project" value="UniProtKB-UniRule"/>
</dbReference>
<dbReference type="Gene3D" id="3.40.1370.10">
    <property type="match status" value="1"/>
</dbReference>
<dbReference type="HAMAP" id="MF_01328_B">
    <property type="entry name" value="Ribosomal_uL4_B"/>
    <property type="match status" value="1"/>
</dbReference>
<dbReference type="InterPro" id="IPR002136">
    <property type="entry name" value="Ribosomal_uL4"/>
</dbReference>
<dbReference type="InterPro" id="IPR013005">
    <property type="entry name" value="Ribosomal_uL4-like"/>
</dbReference>
<dbReference type="InterPro" id="IPR023574">
    <property type="entry name" value="Ribosomal_uL4_dom_sf"/>
</dbReference>
<dbReference type="NCBIfam" id="TIGR03953">
    <property type="entry name" value="rplD_bact"/>
    <property type="match status" value="1"/>
</dbReference>
<dbReference type="PANTHER" id="PTHR10746">
    <property type="entry name" value="50S RIBOSOMAL PROTEIN L4"/>
    <property type="match status" value="1"/>
</dbReference>
<dbReference type="PANTHER" id="PTHR10746:SF17">
    <property type="entry name" value="LARGE RIBOSOMAL SUBUNIT PROTEIN UL4C"/>
    <property type="match status" value="1"/>
</dbReference>
<dbReference type="Pfam" id="PF00573">
    <property type="entry name" value="Ribosomal_L4"/>
    <property type="match status" value="1"/>
</dbReference>
<dbReference type="SUPFAM" id="SSF52166">
    <property type="entry name" value="Ribosomal protein L4"/>
    <property type="match status" value="1"/>
</dbReference>
<keyword id="KW-0150">Chloroplast</keyword>
<keyword id="KW-0934">Plastid</keyword>
<keyword id="KW-0687">Ribonucleoprotein</keyword>
<keyword id="KW-0689">Ribosomal protein</keyword>
<keyword id="KW-0694">RNA-binding</keyword>
<keyword id="KW-0699">rRNA-binding</keyword>
<geneLocation type="chloroplast"/>
<proteinExistence type="inferred from homology"/>
<evidence type="ECO:0000250" key="1"/>
<evidence type="ECO:0000256" key="2">
    <source>
        <dbReference type="SAM" id="MobiDB-lite"/>
    </source>
</evidence>
<evidence type="ECO:0000305" key="3"/>
<reference key="1">
    <citation type="journal article" date="2007" name="Mol. Genet. Genomics">
        <title>Chloroplast genomes of the diatoms Phaeodactylum tricornutum and Thalassiosira pseudonana: comparison with other plastid genomes of the red lineage.</title>
        <authorList>
            <person name="Oudot-Le Secq M.-P."/>
            <person name="Grimwood J."/>
            <person name="Shapiro H."/>
            <person name="Armbrust E.V."/>
            <person name="Bowler C."/>
            <person name="Green B.R."/>
        </authorList>
    </citation>
    <scope>NUCLEOTIDE SEQUENCE [LARGE SCALE GENOMIC DNA]</scope>
    <source>
        <strain>CCMP1335 / NEPCC58 / CCAP 1085/12</strain>
    </source>
</reference>
<accession>A0T0X3</accession>
<organism>
    <name type="scientific">Thalassiosira pseudonana</name>
    <name type="common">Marine diatom</name>
    <name type="synonym">Cyclotella nana</name>
    <dbReference type="NCBI Taxonomy" id="35128"/>
    <lineage>
        <taxon>Eukaryota</taxon>
        <taxon>Sar</taxon>
        <taxon>Stramenopiles</taxon>
        <taxon>Ochrophyta</taxon>
        <taxon>Bacillariophyta</taxon>
        <taxon>Coscinodiscophyceae</taxon>
        <taxon>Thalassiosirophycidae</taxon>
        <taxon>Thalassiosirales</taxon>
        <taxon>Thalassiosiraceae</taxon>
        <taxon>Thalassiosira</taxon>
    </lineage>
</organism>
<gene>
    <name type="primary">rpl4</name>
</gene>
<feature type="chain" id="PRO_0000276576" description="Large ribosomal subunit protein uL4c">
    <location>
        <begin position="1"/>
        <end position="215"/>
    </location>
</feature>
<feature type="region of interest" description="Disordered" evidence="2">
    <location>
        <begin position="51"/>
        <end position="87"/>
    </location>
</feature>
<feature type="compositionally biased region" description="Basic residues" evidence="2">
    <location>
        <begin position="67"/>
        <end position="78"/>
    </location>
</feature>
<name>RK4_THAPS</name>
<sequence>MTVQRFIEYTPFDSNGQQLPGESRKITLNVLLEDSGNYLIHRDILRHQLSQKQGTVSTKTRSEVRGGGKKPWRQKGTGRARAGSSRSPLWKGGGVIFGPKPKTANLKLNKKERNLALQTLLYNKRDIITQVSTLDIKNVKTKEFYNFCKEKGFNLNEKLLVIDSEKTTPLKLSTRNLKNVELISASNLNTLSLLKAKKILVTTSALNDIKEIYCG</sequence>
<protein>
    <recommendedName>
        <fullName evidence="3">Large ribosomal subunit protein uL4c</fullName>
    </recommendedName>
    <alternativeName>
        <fullName>50S ribosomal protein L4, chloroplastic</fullName>
    </alternativeName>
</protein>